<protein>
    <recommendedName>
        <fullName evidence="1">Nucleoid-associated protein Sez_0297</fullName>
    </recommendedName>
</protein>
<keyword id="KW-0963">Cytoplasm</keyword>
<keyword id="KW-0238">DNA-binding</keyword>
<feature type="chain" id="PRO_1000114650" description="Nucleoid-associated protein Sez_0297">
    <location>
        <begin position="1"/>
        <end position="99"/>
    </location>
</feature>
<dbReference type="EMBL" id="CP001129">
    <property type="protein sequence ID" value="ACG61673.1"/>
    <property type="molecule type" value="Genomic_DNA"/>
</dbReference>
<dbReference type="RefSeq" id="WP_012514952.1">
    <property type="nucleotide sequence ID" value="NC_011134.1"/>
</dbReference>
<dbReference type="SMR" id="B4U0Y6"/>
<dbReference type="KEGG" id="sez:Sez_0297"/>
<dbReference type="HOGENOM" id="CLU_140930_1_1_9"/>
<dbReference type="Proteomes" id="UP000001873">
    <property type="component" value="Chromosome"/>
</dbReference>
<dbReference type="GO" id="GO:0043590">
    <property type="term" value="C:bacterial nucleoid"/>
    <property type="evidence" value="ECO:0007669"/>
    <property type="project" value="UniProtKB-UniRule"/>
</dbReference>
<dbReference type="GO" id="GO:0005829">
    <property type="term" value="C:cytosol"/>
    <property type="evidence" value="ECO:0007669"/>
    <property type="project" value="TreeGrafter"/>
</dbReference>
<dbReference type="GO" id="GO:0003677">
    <property type="term" value="F:DNA binding"/>
    <property type="evidence" value="ECO:0007669"/>
    <property type="project" value="UniProtKB-UniRule"/>
</dbReference>
<dbReference type="Gene3D" id="3.30.1310.10">
    <property type="entry name" value="Nucleoid-associated protein YbaB-like domain"/>
    <property type="match status" value="1"/>
</dbReference>
<dbReference type="HAMAP" id="MF_00274">
    <property type="entry name" value="DNA_YbaB_EbfC"/>
    <property type="match status" value="1"/>
</dbReference>
<dbReference type="InterPro" id="IPR036894">
    <property type="entry name" value="YbaB-like_sf"/>
</dbReference>
<dbReference type="InterPro" id="IPR004401">
    <property type="entry name" value="YbaB/EbfC"/>
</dbReference>
<dbReference type="NCBIfam" id="TIGR00103">
    <property type="entry name" value="DNA_YbaB_EbfC"/>
    <property type="match status" value="1"/>
</dbReference>
<dbReference type="PANTHER" id="PTHR33449">
    <property type="entry name" value="NUCLEOID-ASSOCIATED PROTEIN YBAB"/>
    <property type="match status" value="1"/>
</dbReference>
<dbReference type="PANTHER" id="PTHR33449:SF1">
    <property type="entry name" value="NUCLEOID-ASSOCIATED PROTEIN YBAB"/>
    <property type="match status" value="1"/>
</dbReference>
<dbReference type="Pfam" id="PF02575">
    <property type="entry name" value="YbaB_DNA_bd"/>
    <property type="match status" value="1"/>
</dbReference>
<dbReference type="PIRSF" id="PIRSF004555">
    <property type="entry name" value="UCP004555"/>
    <property type="match status" value="1"/>
</dbReference>
<dbReference type="SUPFAM" id="SSF82607">
    <property type="entry name" value="YbaB-like"/>
    <property type="match status" value="1"/>
</dbReference>
<accession>B4U0Y6</accession>
<comment type="function">
    <text evidence="1">Binds to DNA and alters its conformation. May be involved in regulation of gene expression, nucleoid organization and DNA protection.</text>
</comment>
<comment type="subunit">
    <text evidence="1">Homodimer.</text>
</comment>
<comment type="subcellular location">
    <subcellularLocation>
        <location evidence="1">Cytoplasm</location>
        <location evidence="1">Nucleoid</location>
    </subcellularLocation>
</comment>
<comment type="similarity">
    <text evidence="1">Belongs to the YbaB/EbfC family.</text>
</comment>
<gene>
    <name type="ordered locus">Sez_0297</name>
</gene>
<name>Y297_STREM</name>
<sequence length="99" mass="10900">MMNMQNMMKQAQKLQKQMEQKQADLAAMQFTGKSAQELVTATFTGDKQLVSIDFKEAVVDPEDIETLQDMTAQAINAALAQIDEATKKTLGAFAGKLPF</sequence>
<reference key="1">
    <citation type="journal article" date="2008" name="PLoS ONE">
        <title>Genome sequence of a lancefield group C Streptococcus zooepidemicus strain causing epidemic nephritis: new information about an old disease.</title>
        <authorList>
            <person name="Beres S.B."/>
            <person name="Sesso R."/>
            <person name="Pinto S.W.L."/>
            <person name="Hoe N.P."/>
            <person name="Porcella S.F."/>
            <person name="Deleo F.R."/>
            <person name="Musser J.M."/>
        </authorList>
    </citation>
    <scope>NUCLEOTIDE SEQUENCE [LARGE SCALE GENOMIC DNA]</scope>
    <source>
        <strain>MGCS10565</strain>
    </source>
</reference>
<organism>
    <name type="scientific">Streptococcus equi subsp. zooepidemicus (strain MGCS10565)</name>
    <dbReference type="NCBI Taxonomy" id="552526"/>
    <lineage>
        <taxon>Bacteria</taxon>
        <taxon>Bacillati</taxon>
        <taxon>Bacillota</taxon>
        <taxon>Bacilli</taxon>
        <taxon>Lactobacillales</taxon>
        <taxon>Streptococcaceae</taxon>
        <taxon>Streptococcus</taxon>
    </lineage>
</organism>
<proteinExistence type="inferred from homology"/>
<evidence type="ECO:0000255" key="1">
    <source>
        <dbReference type="HAMAP-Rule" id="MF_00274"/>
    </source>
</evidence>